<evidence type="ECO:0000250" key="1"/>
<evidence type="ECO:0000255" key="2"/>
<evidence type="ECO:0000305" key="3"/>
<protein>
    <recommendedName>
        <fullName>Membrane glycoprotein UL18</fullName>
    </recommendedName>
</protein>
<dbReference type="EMBL" id="AY446894">
    <property type="protein sequence ID" value="AAR31583.1"/>
    <property type="molecule type" value="Genomic_DNA"/>
</dbReference>
<dbReference type="RefSeq" id="YP_081477.1">
    <property type="nucleotide sequence ID" value="NC_006273.2"/>
</dbReference>
<dbReference type="SMR" id="F5HFB4"/>
<dbReference type="DNASU" id="3077466"/>
<dbReference type="GeneID" id="3077466"/>
<dbReference type="KEGG" id="vg:3077466"/>
<dbReference type="Reactome" id="R-HSA-9610379">
    <property type="pathway name" value="HCMV Late Events"/>
</dbReference>
<dbReference type="Proteomes" id="UP000000938">
    <property type="component" value="Segment"/>
</dbReference>
<dbReference type="GO" id="GO:0033644">
    <property type="term" value="C:host cell membrane"/>
    <property type="evidence" value="ECO:0007669"/>
    <property type="project" value="UniProtKB-SubCell"/>
</dbReference>
<dbReference type="GO" id="GO:0042612">
    <property type="term" value="C:MHC class I protein complex"/>
    <property type="evidence" value="ECO:0007669"/>
    <property type="project" value="UniProtKB-KW"/>
</dbReference>
<dbReference type="GO" id="GO:0002474">
    <property type="term" value="P:antigen processing and presentation of peptide antigen via MHC class I"/>
    <property type="evidence" value="ECO:0007669"/>
    <property type="project" value="UniProtKB-KW"/>
</dbReference>
<dbReference type="GO" id="GO:0039671">
    <property type="term" value="P:symbiont-mediated perturbation of host natural killer cell mediated immune response"/>
    <property type="evidence" value="ECO:0007669"/>
    <property type="project" value="UniProtKB-KW"/>
</dbReference>
<dbReference type="FunFam" id="3.30.500.10:FF:000012">
    <property type="entry name" value="Glycoprotein UL18"/>
    <property type="match status" value="1"/>
</dbReference>
<dbReference type="Gene3D" id="2.60.40.10">
    <property type="entry name" value="Immunoglobulins"/>
    <property type="match status" value="1"/>
</dbReference>
<dbReference type="Gene3D" id="3.30.500.10">
    <property type="entry name" value="MHC class I-like antigen recognition-like"/>
    <property type="match status" value="1"/>
</dbReference>
<dbReference type="InterPro" id="IPR036179">
    <property type="entry name" value="Ig-like_dom_sf"/>
</dbReference>
<dbReference type="InterPro" id="IPR013783">
    <property type="entry name" value="Ig-like_fold"/>
</dbReference>
<dbReference type="InterPro" id="IPR050208">
    <property type="entry name" value="MHC_class-I_related"/>
</dbReference>
<dbReference type="InterPro" id="IPR011161">
    <property type="entry name" value="MHC_I-like_Ag-recog"/>
</dbReference>
<dbReference type="InterPro" id="IPR037055">
    <property type="entry name" value="MHC_I-like_Ag-recog_sf"/>
</dbReference>
<dbReference type="InterPro" id="IPR011162">
    <property type="entry name" value="MHC_I/II-like_Ag-recog"/>
</dbReference>
<dbReference type="PANTHER" id="PTHR16675">
    <property type="entry name" value="MHC CLASS I-RELATED"/>
    <property type="match status" value="1"/>
</dbReference>
<dbReference type="PANTHER" id="PTHR16675:SF235">
    <property type="entry name" value="SHKT DOMAIN-CONTAINING PROTEIN"/>
    <property type="match status" value="1"/>
</dbReference>
<dbReference type="Pfam" id="PF00129">
    <property type="entry name" value="MHC_I"/>
    <property type="match status" value="1"/>
</dbReference>
<dbReference type="SUPFAM" id="SSF48726">
    <property type="entry name" value="Immunoglobulin"/>
    <property type="match status" value="1"/>
</dbReference>
<dbReference type="SUPFAM" id="SSF54452">
    <property type="entry name" value="MHC antigen-recognition domain"/>
    <property type="match status" value="1"/>
</dbReference>
<dbReference type="PROSITE" id="PS00290">
    <property type="entry name" value="IG_MHC"/>
    <property type="match status" value="1"/>
</dbReference>
<sequence length="368" mass="41730">MMTMWCLTLFVLWMLRVVGMHVLRYGYTGIFDDTSHMTLTVVGIFDGQHFFTYHVNSSDKASSRANGTISWMANVSAAYPTYLDGERAKGDLIFNQTEQNLLELEIALGYRSQSVLTWTHECNTTENGSFVAGYEGFGWDGETLMELKDNLTLWTGPNYEISWLKQNKTYIDGKIKNISEGDTTIQRNYLKGNCTQWSVIYSGFQTPVTHPVVKGGVRNQNDNRAEAFCTSYGFFPGEINITFIHYGNKAPDDSEPQCNPLLPTFDGTFHQGCYVAIFCNQNYTCRVTHGNWTVEIPISVTSPDDSSSGEVPDHPTANKRYNTMTISSVLLALLLCALLFAFLHYFTTLKQYLRNLAFAWRYRKVRSS</sequence>
<reference key="1">
    <citation type="journal article" date="2004" name="J. Gen. Virol.">
        <title>Genetic content of wild-type human cytomegalovirus.</title>
        <authorList>
            <person name="Dolan A."/>
            <person name="Cunningham C."/>
            <person name="Hector R.D."/>
            <person name="Hassan-Walker A.F."/>
            <person name="Lee L."/>
            <person name="Addison C."/>
            <person name="Dargan D.J."/>
            <person name="McGeoch D.J."/>
            <person name="Gatherer D."/>
            <person name="Emery V.C."/>
            <person name="Griffiths P.D."/>
            <person name="Sinzger C."/>
            <person name="McSharry B.P."/>
            <person name="Wilkinson G.W.G."/>
            <person name="Davison A.J."/>
        </authorList>
    </citation>
    <scope>NUCLEOTIDE SEQUENCE [LARGE SCALE GENOMIC DNA]</scope>
</reference>
<comment type="function">
    <text evidence="1">Plays a role in the protection against host NK cell cytotoxicity by interacting with and modulating the activity of the host inhibitory leukocyte Ig-like receptor 1/LILRB1, which is expressed on monocytes, dendritic cells, as well as subsets of T and NK cells. UL18 exerts an inhibitory effect on LIR-1+ NK cells, while it stimulates LIR-1- NK cell (By similarity).</text>
</comment>
<comment type="subunit">
    <text evidence="1">Interacts with host LILRB1.</text>
</comment>
<comment type="subcellular location">
    <subcellularLocation>
        <location evidence="3">Host membrane</location>
        <topology evidence="3">Single-pass membrane protein</topology>
    </subcellularLocation>
</comment>
<gene>
    <name type="primary">UL18</name>
</gene>
<keyword id="KW-0325">Glycoprotein</keyword>
<keyword id="KW-1043">Host membrane</keyword>
<keyword id="KW-0945">Host-virus interaction</keyword>
<keyword id="KW-0391">Immunity</keyword>
<keyword id="KW-0472">Membrane</keyword>
<keyword id="KW-0490">MHC I</keyword>
<keyword id="KW-1131">Modulation of host NK-cell activity by virus</keyword>
<keyword id="KW-1185">Reference proteome</keyword>
<keyword id="KW-0732">Signal</keyword>
<keyword id="KW-0812">Transmembrane</keyword>
<keyword id="KW-1133">Transmembrane helix</keyword>
<keyword id="KW-0899">Viral immunoevasion</keyword>
<organismHost>
    <name type="scientific">Homo sapiens</name>
    <name type="common">Human</name>
    <dbReference type="NCBI Taxonomy" id="9606"/>
</organismHost>
<organism>
    <name type="scientific">Human cytomegalovirus (strain Merlin)</name>
    <name type="common">HHV-5</name>
    <name type="synonym">Human herpesvirus 5</name>
    <dbReference type="NCBI Taxonomy" id="295027"/>
    <lineage>
        <taxon>Viruses</taxon>
        <taxon>Duplodnaviria</taxon>
        <taxon>Heunggongvirae</taxon>
        <taxon>Peploviricota</taxon>
        <taxon>Herviviricetes</taxon>
        <taxon>Herpesvirales</taxon>
        <taxon>Orthoherpesviridae</taxon>
        <taxon>Betaherpesvirinae</taxon>
        <taxon>Cytomegalovirus</taxon>
        <taxon>Cytomegalovirus humanbeta5</taxon>
        <taxon>Human cytomegalovirus</taxon>
    </lineage>
</organism>
<name>UL18_HCMVM</name>
<feature type="signal peptide" evidence="2">
    <location>
        <begin position="1"/>
        <end position="19"/>
    </location>
</feature>
<feature type="chain" id="PRO_0000418297" description="Membrane glycoprotein UL18">
    <location>
        <begin position="20"/>
        <end position="368"/>
    </location>
</feature>
<feature type="transmembrane region" description="Helical" evidence="2">
    <location>
        <begin position="326"/>
        <end position="346"/>
    </location>
</feature>
<accession>F5HFB4</accession>
<proteinExistence type="inferred from homology"/>